<protein>
    <recommendedName>
        <fullName>Probable metallo-hydrolase YflN</fullName>
        <ecNumber>3.-.-.-</ecNumber>
    </recommendedName>
</protein>
<feature type="chain" id="PRO_0000049536" description="Probable metallo-hydrolase YflN">
    <location>
        <begin position="1"/>
        <end position="264"/>
    </location>
</feature>
<feature type="binding site" evidence="1">
    <location>
        <position position="80"/>
    </location>
    <ligand>
        <name>Zn(2+)</name>
        <dbReference type="ChEBI" id="CHEBI:29105"/>
        <label>1</label>
    </ligand>
</feature>
<feature type="binding site" evidence="1">
    <location>
        <position position="82"/>
    </location>
    <ligand>
        <name>Zn(2+)</name>
        <dbReference type="ChEBI" id="CHEBI:29105"/>
        <label>1</label>
    </ligand>
</feature>
<feature type="binding site" evidence="1">
    <location>
        <position position="84"/>
    </location>
    <ligand>
        <name>Zn(2+)</name>
        <dbReference type="ChEBI" id="CHEBI:29105"/>
        <label>2</label>
    </ligand>
</feature>
<feature type="binding site" evidence="1">
    <location>
        <position position="85"/>
    </location>
    <ligand>
        <name>Zn(2+)</name>
        <dbReference type="ChEBI" id="CHEBI:29105"/>
        <label>2</label>
    </ligand>
</feature>
<feature type="binding site" evidence="1">
    <location>
        <position position="169"/>
    </location>
    <ligand>
        <name>Zn(2+)</name>
        <dbReference type="ChEBI" id="CHEBI:29105"/>
        <label>1</label>
    </ligand>
</feature>
<feature type="binding site" evidence="1">
    <location>
        <position position="188"/>
    </location>
    <ligand>
        <name>Zn(2+)</name>
        <dbReference type="ChEBI" id="CHEBI:29105"/>
        <label>1</label>
    </ligand>
</feature>
<feature type="binding site" evidence="1">
    <location>
        <position position="188"/>
    </location>
    <ligand>
        <name>Zn(2+)</name>
        <dbReference type="ChEBI" id="CHEBI:29105"/>
        <label>2</label>
    </ligand>
</feature>
<feature type="binding site" evidence="1">
    <location>
        <position position="241"/>
    </location>
    <ligand>
        <name>Zn(2+)</name>
        <dbReference type="ChEBI" id="CHEBI:29105"/>
        <label>2</label>
    </ligand>
</feature>
<organism>
    <name type="scientific">Bacillus subtilis (strain 168)</name>
    <dbReference type="NCBI Taxonomy" id="224308"/>
    <lineage>
        <taxon>Bacteria</taxon>
        <taxon>Bacillati</taxon>
        <taxon>Bacillota</taxon>
        <taxon>Bacilli</taxon>
        <taxon>Bacillales</taxon>
        <taxon>Bacillaceae</taxon>
        <taxon>Bacillus</taxon>
    </lineage>
</organism>
<gene>
    <name type="primary">yflN</name>
    <name type="ordered locus">BSU07620</name>
</gene>
<proteinExistence type="evidence at transcript level"/>
<accession>O34409</accession>
<comment type="cofactor">
    <cofactor evidence="1">
        <name>Zn(2+)</name>
        <dbReference type="ChEBI" id="CHEBI:29105"/>
    </cofactor>
    <text evidence="1">Binds 2 Zn(2+) ions per subunit.</text>
</comment>
<comment type="induction">
    <text evidence="2 3">Expression is under strict control of the medium composition. Induced by citrate, probably via the two-component regulatory system CitT/CitS. Repressed by rapidly metabolized carbon sources like glucose, glycerol and inositol, via the carbon catabolite repression system. Is also repressed by succinate and glutamate, albeit to a lesser extent.</text>
</comment>
<comment type="similarity">
    <text evidence="4">Belongs to the metallo-beta-lactamase superfamily.</text>
</comment>
<evidence type="ECO:0000250" key="1"/>
<evidence type="ECO:0000269" key="2">
    <source>
    </source>
</evidence>
<evidence type="ECO:0000269" key="3">
    <source>
    </source>
</evidence>
<evidence type="ECO:0000305" key="4"/>
<reference key="1">
    <citation type="journal article" date="1997" name="Gene">
        <title>Cloning and sequencing of a 35.7 kb in the 70 degree-73 degree region of the Bacillus subtilis genome reveal genes for a new two-component system, three spore germination proteins, an iron uptake system and a general stress response protein.</title>
        <authorList>
            <person name="Yamamoto H."/>
            <person name="Uchiyama S."/>
            <person name="Nugroho F.A."/>
            <person name="Sekiguchi J."/>
        </authorList>
    </citation>
    <scope>NUCLEOTIDE SEQUENCE [GENOMIC DNA]</scope>
    <source>
        <strain>168 / AC327</strain>
    </source>
</reference>
<reference key="2">
    <citation type="journal article" date="1997" name="Nature">
        <title>The complete genome sequence of the Gram-positive bacterium Bacillus subtilis.</title>
        <authorList>
            <person name="Kunst F."/>
            <person name="Ogasawara N."/>
            <person name="Moszer I."/>
            <person name="Albertini A.M."/>
            <person name="Alloni G."/>
            <person name="Azevedo V."/>
            <person name="Bertero M.G."/>
            <person name="Bessieres P."/>
            <person name="Bolotin A."/>
            <person name="Borchert S."/>
            <person name="Borriss R."/>
            <person name="Boursier L."/>
            <person name="Brans A."/>
            <person name="Braun M."/>
            <person name="Brignell S.C."/>
            <person name="Bron S."/>
            <person name="Brouillet S."/>
            <person name="Bruschi C.V."/>
            <person name="Caldwell B."/>
            <person name="Capuano V."/>
            <person name="Carter N.M."/>
            <person name="Choi S.-K."/>
            <person name="Codani J.-J."/>
            <person name="Connerton I.F."/>
            <person name="Cummings N.J."/>
            <person name="Daniel R.A."/>
            <person name="Denizot F."/>
            <person name="Devine K.M."/>
            <person name="Duesterhoeft A."/>
            <person name="Ehrlich S.D."/>
            <person name="Emmerson P.T."/>
            <person name="Entian K.-D."/>
            <person name="Errington J."/>
            <person name="Fabret C."/>
            <person name="Ferrari E."/>
            <person name="Foulger D."/>
            <person name="Fritz C."/>
            <person name="Fujita M."/>
            <person name="Fujita Y."/>
            <person name="Fuma S."/>
            <person name="Galizzi A."/>
            <person name="Galleron N."/>
            <person name="Ghim S.-Y."/>
            <person name="Glaser P."/>
            <person name="Goffeau A."/>
            <person name="Golightly E.J."/>
            <person name="Grandi G."/>
            <person name="Guiseppi G."/>
            <person name="Guy B.J."/>
            <person name="Haga K."/>
            <person name="Haiech J."/>
            <person name="Harwood C.R."/>
            <person name="Henaut A."/>
            <person name="Hilbert H."/>
            <person name="Holsappel S."/>
            <person name="Hosono S."/>
            <person name="Hullo M.-F."/>
            <person name="Itaya M."/>
            <person name="Jones L.-M."/>
            <person name="Joris B."/>
            <person name="Karamata D."/>
            <person name="Kasahara Y."/>
            <person name="Klaerr-Blanchard M."/>
            <person name="Klein C."/>
            <person name="Kobayashi Y."/>
            <person name="Koetter P."/>
            <person name="Koningstein G."/>
            <person name="Krogh S."/>
            <person name="Kumano M."/>
            <person name="Kurita K."/>
            <person name="Lapidus A."/>
            <person name="Lardinois S."/>
            <person name="Lauber J."/>
            <person name="Lazarevic V."/>
            <person name="Lee S.-M."/>
            <person name="Levine A."/>
            <person name="Liu H."/>
            <person name="Masuda S."/>
            <person name="Mauel C."/>
            <person name="Medigue C."/>
            <person name="Medina N."/>
            <person name="Mellado R.P."/>
            <person name="Mizuno M."/>
            <person name="Moestl D."/>
            <person name="Nakai S."/>
            <person name="Noback M."/>
            <person name="Noone D."/>
            <person name="O'Reilly M."/>
            <person name="Ogawa K."/>
            <person name="Ogiwara A."/>
            <person name="Oudega B."/>
            <person name="Park S.-H."/>
            <person name="Parro V."/>
            <person name="Pohl T.M."/>
            <person name="Portetelle D."/>
            <person name="Porwollik S."/>
            <person name="Prescott A.M."/>
            <person name="Presecan E."/>
            <person name="Pujic P."/>
            <person name="Purnelle B."/>
            <person name="Rapoport G."/>
            <person name="Rey M."/>
            <person name="Reynolds S."/>
            <person name="Rieger M."/>
            <person name="Rivolta C."/>
            <person name="Rocha E."/>
            <person name="Roche B."/>
            <person name="Rose M."/>
            <person name="Sadaie Y."/>
            <person name="Sato T."/>
            <person name="Scanlan E."/>
            <person name="Schleich S."/>
            <person name="Schroeter R."/>
            <person name="Scoffone F."/>
            <person name="Sekiguchi J."/>
            <person name="Sekowska A."/>
            <person name="Seror S.J."/>
            <person name="Serror P."/>
            <person name="Shin B.-S."/>
            <person name="Soldo B."/>
            <person name="Sorokin A."/>
            <person name="Tacconi E."/>
            <person name="Takagi T."/>
            <person name="Takahashi H."/>
            <person name="Takemaru K."/>
            <person name="Takeuchi M."/>
            <person name="Tamakoshi A."/>
            <person name="Tanaka T."/>
            <person name="Terpstra P."/>
            <person name="Tognoni A."/>
            <person name="Tosato V."/>
            <person name="Uchiyama S."/>
            <person name="Vandenbol M."/>
            <person name="Vannier F."/>
            <person name="Vassarotti A."/>
            <person name="Viari A."/>
            <person name="Wambutt R."/>
            <person name="Wedler E."/>
            <person name="Wedler H."/>
            <person name="Weitzenegger T."/>
            <person name="Winters P."/>
            <person name="Wipat A."/>
            <person name="Yamamoto H."/>
            <person name="Yamane K."/>
            <person name="Yasumoto K."/>
            <person name="Yata K."/>
            <person name="Yoshida K."/>
            <person name="Yoshikawa H.-F."/>
            <person name="Zumstein E."/>
            <person name="Yoshikawa H."/>
            <person name="Danchin A."/>
        </authorList>
    </citation>
    <scope>NUCLEOTIDE SEQUENCE [LARGE SCALE GENOMIC DNA]</scope>
    <source>
        <strain>168</strain>
    </source>
</reference>
<reference key="3">
    <citation type="journal article" date="2000" name="Mol. Microbiol.">
        <title>The CitST two-component system regulates the expression of the Mg-citrate transporter in Bacillus subtilis.</title>
        <authorList>
            <person name="Yamamoto H."/>
            <person name="Murata M."/>
            <person name="Sekiguchi J."/>
        </authorList>
    </citation>
    <scope>TRANSCRIPTIONAL REGULATION</scope>
    <source>
        <strain>168</strain>
    </source>
</reference>
<reference key="4">
    <citation type="journal article" date="2000" name="J. Bacteriol.">
        <title>Catabolite repression and induction of the Mg(2+)-citrate transporter CitM of Bacillus subtilis.</title>
        <authorList>
            <person name="Warner J.B."/>
            <person name="Krom B.P."/>
            <person name="Magni C."/>
            <person name="Konings W.N."/>
            <person name="Lolkema J.S."/>
        </authorList>
    </citation>
    <scope>TRANSCRIPTIONAL REGULATION</scope>
    <source>
        <strain>168</strain>
    </source>
</reference>
<name>YFLN_BACSU</name>
<dbReference type="EC" id="3.-.-.-"/>
<dbReference type="EMBL" id="D86417">
    <property type="protein sequence ID" value="BAA22307.1"/>
    <property type="molecule type" value="Genomic_DNA"/>
</dbReference>
<dbReference type="EMBL" id="AL009126">
    <property type="protein sequence ID" value="CAB12591.1"/>
    <property type="molecule type" value="Genomic_DNA"/>
</dbReference>
<dbReference type="PIR" id="D69811">
    <property type="entry name" value="D69811"/>
</dbReference>
<dbReference type="RefSeq" id="NP_388643.1">
    <property type="nucleotide sequence ID" value="NC_000964.3"/>
</dbReference>
<dbReference type="RefSeq" id="WP_009966790.1">
    <property type="nucleotide sequence ID" value="NZ_OZ025638.1"/>
</dbReference>
<dbReference type="SMR" id="O34409"/>
<dbReference type="FunCoup" id="O34409">
    <property type="interactions" value="114"/>
</dbReference>
<dbReference type="STRING" id="224308.BSU07620"/>
<dbReference type="PaxDb" id="224308-BSU07620"/>
<dbReference type="EnsemblBacteria" id="CAB12591">
    <property type="protein sequence ID" value="CAB12591"/>
    <property type="gene ID" value="BSU_07620"/>
</dbReference>
<dbReference type="GeneID" id="936120"/>
<dbReference type="KEGG" id="bsu:BSU07620"/>
<dbReference type="PATRIC" id="fig|224308.179.peg.828"/>
<dbReference type="eggNOG" id="COG0491">
    <property type="taxonomic scope" value="Bacteria"/>
</dbReference>
<dbReference type="InParanoid" id="O34409"/>
<dbReference type="OrthoDB" id="9802248at2"/>
<dbReference type="PhylomeDB" id="O34409"/>
<dbReference type="BioCyc" id="BSUB:BSU07620-MONOMER"/>
<dbReference type="Proteomes" id="UP000001570">
    <property type="component" value="Chromosome"/>
</dbReference>
<dbReference type="GO" id="GO:0016787">
    <property type="term" value="F:hydrolase activity"/>
    <property type="evidence" value="ECO:0007669"/>
    <property type="project" value="UniProtKB-KW"/>
</dbReference>
<dbReference type="GO" id="GO:0046872">
    <property type="term" value="F:metal ion binding"/>
    <property type="evidence" value="ECO:0007669"/>
    <property type="project" value="UniProtKB-KW"/>
</dbReference>
<dbReference type="CDD" id="cd07721">
    <property type="entry name" value="yflN-like_MBL-fold"/>
    <property type="match status" value="1"/>
</dbReference>
<dbReference type="Gene3D" id="3.60.15.10">
    <property type="entry name" value="Ribonuclease Z/Hydroxyacylglutathione hydrolase-like"/>
    <property type="match status" value="1"/>
</dbReference>
<dbReference type="InterPro" id="IPR001279">
    <property type="entry name" value="Metallo-B-lactamas"/>
</dbReference>
<dbReference type="InterPro" id="IPR050855">
    <property type="entry name" value="NDM-1-like"/>
</dbReference>
<dbReference type="InterPro" id="IPR036866">
    <property type="entry name" value="RibonucZ/Hydroxyglut_hydro"/>
</dbReference>
<dbReference type="PANTHER" id="PTHR42951">
    <property type="entry name" value="METALLO-BETA-LACTAMASE DOMAIN-CONTAINING"/>
    <property type="match status" value="1"/>
</dbReference>
<dbReference type="PANTHER" id="PTHR42951:SF17">
    <property type="entry name" value="METALLO-BETA-LACTAMASE DOMAIN-CONTAINING PROTEIN"/>
    <property type="match status" value="1"/>
</dbReference>
<dbReference type="Pfam" id="PF00753">
    <property type="entry name" value="Lactamase_B"/>
    <property type="match status" value="1"/>
</dbReference>
<dbReference type="SMART" id="SM00849">
    <property type="entry name" value="Lactamase_B"/>
    <property type="match status" value="1"/>
</dbReference>
<dbReference type="SUPFAM" id="SSF56281">
    <property type="entry name" value="Metallo-hydrolase/oxidoreductase"/>
    <property type="match status" value="1"/>
</dbReference>
<keyword id="KW-0378">Hydrolase</keyword>
<keyword id="KW-0479">Metal-binding</keyword>
<keyword id="KW-1185">Reference proteome</keyword>
<keyword id="KW-0862">Zinc</keyword>
<sequence>MSDPYMPLTSVRSGAGFEAAKGVHGLTVQIANVYFIQLPSEPHSFVLIDAGMPQSAGVIVNEAKQRFGEGFQLKAIILTHGHFDHIGAIEEILEHWDVPVYIHSREMPYVTGKEDYPPARPDSKSGLVAKLSPLFPRHSIDISSHVQALPEDGSVPFLDEWMWIATPGHTPGHISLFRDDGRVLVAGDAVITVEQEKMADVLIQKQELHGPPAYFTPDTETAAESILKLAGLEPEALLTGHGIPMTGKNFRSDLTELANRLSSI</sequence>